<reference key="1">
    <citation type="submission" date="2005-12" db="EMBL/GenBank/DDBJ databases">
        <title>Bovine genome sequencing program: full-length cDNA sequencing.</title>
        <authorList>
            <person name="Moore S."/>
            <person name="Alexander L."/>
            <person name="Brownstein M."/>
            <person name="Guan L."/>
            <person name="Lobo S."/>
            <person name="Meng Y."/>
            <person name="Tanaguchi M."/>
            <person name="Wang Z."/>
            <person name="Yu J."/>
            <person name="Prange C."/>
            <person name="Schreiber K."/>
            <person name="Shenmen C."/>
            <person name="Wagner L."/>
            <person name="Bala M."/>
            <person name="Barbazuk S."/>
            <person name="Barber S."/>
            <person name="Babakaiff R."/>
            <person name="Beland J."/>
            <person name="Chun E."/>
            <person name="Del Rio L."/>
            <person name="Gibson S."/>
            <person name="Hanson R."/>
            <person name="Kirkpatrick R."/>
            <person name="Liu J."/>
            <person name="Matsuo C."/>
            <person name="Mayo M."/>
            <person name="Santos R.R."/>
            <person name="Stott J."/>
            <person name="Tsai M."/>
            <person name="Wong D."/>
            <person name="Siddiqui A."/>
            <person name="Holt R."/>
            <person name="Jones S.J."/>
            <person name="Marra M.A."/>
        </authorList>
    </citation>
    <scope>NUCLEOTIDE SEQUENCE [LARGE SCALE MRNA]</scope>
</reference>
<reference key="2">
    <citation type="journal article" date="2002" name="Nature">
        <title>SWAP-70 is a guanine-nucleotide-exchange factor that mediates signalling of membrane ruffling.</title>
        <authorList>
            <person name="Shinohara M."/>
            <person name="Terada Y."/>
            <person name="Iwamatsu A."/>
            <person name="Shinohara A."/>
            <person name="Mochizuki N."/>
            <person name="Higuchi M."/>
            <person name="Gotoh Y."/>
            <person name="Ihara S."/>
            <person name="Nagata S."/>
            <person name="Itoh H."/>
            <person name="Fukui Y."/>
            <person name="Jessberger R."/>
        </authorList>
    </citation>
    <scope>PROTEIN SEQUENCE OF 33-40; 448-457; 466-474; 482-490 AND 492-507</scope>
    <scope>MUTAGENESIS OF ARG-230 AND LYS-291</scope>
    <scope>DOMAIN</scope>
    <scope>FUNCTION</scope>
    <scope>SUBCELLULAR LOCATION</scope>
    <source>
        <tissue>Brain</tissue>
    </source>
</reference>
<organism>
    <name type="scientific">Bos taurus</name>
    <name type="common">Bovine</name>
    <dbReference type="NCBI Taxonomy" id="9913"/>
    <lineage>
        <taxon>Eukaryota</taxon>
        <taxon>Metazoa</taxon>
        <taxon>Chordata</taxon>
        <taxon>Craniata</taxon>
        <taxon>Vertebrata</taxon>
        <taxon>Euteleostomi</taxon>
        <taxon>Mammalia</taxon>
        <taxon>Eutheria</taxon>
        <taxon>Laurasiatheria</taxon>
        <taxon>Artiodactyla</taxon>
        <taxon>Ruminantia</taxon>
        <taxon>Pecora</taxon>
        <taxon>Bovidae</taxon>
        <taxon>Bovinae</taxon>
        <taxon>Bos</taxon>
    </lineage>
</organism>
<accession>P0C1G6</accession>
<gene>
    <name type="primary">SWAP70</name>
</gene>
<comment type="function">
    <text evidence="1 4">Phosphatidylinositol 3,4,5-trisphosphate-dependent guanine nucleotide exchange factor (GEF) which, independently of RAS, transduces signals from tyrosine kinase receptors to RAC. It also mediates signaling of membrane ruffling. Regulates the actin cytoskeleton as an effector or adapter protein in response to agonist stimulated phosphatidylinositol (3,4)-bisphosphate production and cell protrusion (By similarity).</text>
</comment>
<comment type="subunit">
    <text evidence="1">The SWAP complex consists of NPM1, NCL, PARP1 and SWAP70.</text>
</comment>
<comment type="subcellular location">
    <subcellularLocation>
        <location evidence="1">Cytoplasm</location>
    </subcellularLocation>
    <subcellularLocation>
        <location evidence="1">Cell membrane</location>
    </subcellularLocation>
    <subcellularLocation>
        <location evidence="1">Nucleus</location>
    </subcellularLocation>
    <subcellularLocation>
        <location evidence="1">Cell projection</location>
        <location evidence="1">Lamellipodium</location>
    </subcellularLocation>
    <text evidence="1">In resting B-cells it is localized mainly in the cytoplasm and upon cell activation it is recruited to the plasma membrane and then translocates to the nucleus. In activated, class-switching B-cells it is associated with membrane IgG but not IgM. Localized to loose actin filament arrays located behind actively extending lamellipodia (By similarity).</text>
</comment>
<comment type="domain">
    <text evidence="4">The PH domain is essential for phosphatidylinositol 3,4,5-trisphosphate binding.</text>
</comment>
<comment type="PTM">
    <text evidence="1">Tyrosine-phosphorylated.</text>
</comment>
<feature type="chain" id="PRO_0000240279" description="Switch-associated protein 70">
    <location>
        <begin position="1"/>
        <end position="585"/>
    </location>
</feature>
<feature type="domain" description="PH" evidence="3">
    <location>
        <begin position="210"/>
        <end position="306"/>
    </location>
</feature>
<feature type="coiled-coil region" evidence="2">
    <location>
        <begin position="316"/>
        <end position="532"/>
    </location>
</feature>
<feature type="mutagenesis site" description="Abolishes binding to phosphatidylinositol 3,4,5-trisphosphate and blocks formation of membrane ruffles." evidence="4">
    <original>R</original>
    <variation>C</variation>
    <location>
        <position position="230"/>
    </location>
</feature>
<feature type="mutagenesis site" description="Abolishes binding to phosphatidylinositol 3,4,5-trisphosphate and blocks formation of membrane ruffles." evidence="4">
    <original>K</original>
    <variation>A</variation>
    <location>
        <position position="291"/>
    </location>
</feature>
<feature type="sequence conflict" description="In Ref. 2; AA sequence." evidence="5" ref="2">
    <original>W</original>
    <variation>S</variation>
    <location>
        <position position="467"/>
    </location>
</feature>
<feature type="sequence conflict" description="In Ref. 2; AA sequence." evidence="5" ref="2">
    <original>Q</original>
    <variation>P</variation>
    <location>
        <position position="504"/>
    </location>
</feature>
<dbReference type="EMBL" id="DV831848">
    <property type="status" value="NOT_ANNOTATED_CDS"/>
    <property type="molecule type" value="mRNA"/>
</dbReference>
<dbReference type="EMBL" id="DV869818">
    <property type="status" value="NOT_ANNOTATED_CDS"/>
    <property type="molecule type" value="mRNA"/>
</dbReference>
<dbReference type="EMBL" id="DV907929">
    <property type="status" value="NOT_ANNOTATED_CDS"/>
    <property type="molecule type" value="mRNA"/>
</dbReference>
<dbReference type="SMR" id="P0C1G6"/>
<dbReference type="FunCoup" id="P0C1G6">
    <property type="interactions" value="1499"/>
</dbReference>
<dbReference type="STRING" id="9913.ENSBTAP00000002578"/>
<dbReference type="PaxDb" id="9913-ENSBTAP00000002578"/>
<dbReference type="eggNOG" id="ENOG502QSXX">
    <property type="taxonomic scope" value="Eukaryota"/>
</dbReference>
<dbReference type="InParanoid" id="P0C1G6"/>
<dbReference type="OrthoDB" id="8434295at2759"/>
<dbReference type="Proteomes" id="UP000009136">
    <property type="component" value="Unplaced"/>
</dbReference>
<dbReference type="GO" id="GO:0005737">
    <property type="term" value="C:cytoplasm"/>
    <property type="evidence" value="ECO:0000318"/>
    <property type="project" value="GO_Central"/>
</dbReference>
<dbReference type="GO" id="GO:0030027">
    <property type="term" value="C:lamellipodium"/>
    <property type="evidence" value="ECO:0007669"/>
    <property type="project" value="UniProtKB-SubCell"/>
</dbReference>
<dbReference type="GO" id="GO:0005634">
    <property type="term" value="C:nucleus"/>
    <property type="evidence" value="ECO:0000318"/>
    <property type="project" value="GO_Central"/>
</dbReference>
<dbReference type="GO" id="GO:0005886">
    <property type="term" value="C:plasma membrane"/>
    <property type="evidence" value="ECO:0007669"/>
    <property type="project" value="UniProtKB-SubCell"/>
</dbReference>
<dbReference type="GO" id="GO:0003677">
    <property type="term" value="F:DNA binding"/>
    <property type="evidence" value="ECO:0007669"/>
    <property type="project" value="UniProtKB-KW"/>
</dbReference>
<dbReference type="CDD" id="cd13273">
    <property type="entry name" value="PH_SWAP-70"/>
    <property type="match status" value="1"/>
</dbReference>
<dbReference type="FunFam" id="2.30.29.30:FF:000175">
    <property type="entry name" value="switch-associated protein 70 isoform X2"/>
    <property type="match status" value="1"/>
</dbReference>
<dbReference type="Gene3D" id="2.30.29.30">
    <property type="entry name" value="Pleckstrin-homology domain (PH domain)/Phosphotyrosine-binding domain (PTB)"/>
    <property type="match status" value="1"/>
</dbReference>
<dbReference type="InterPro" id="IPR011992">
    <property type="entry name" value="EF-hand-dom_pair"/>
</dbReference>
<dbReference type="InterPro" id="IPR011993">
    <property type="entry name" value="PH-like_dom_sf"/>
</dbReference>
<dbReference type="InterPro" id="IPR001849">
    <property type="entry name" value="PH_domain"/>
</dbReference>
<dbReference type="PANTHER" id="PTHR14383">
    <property type="entry name" value="SWAP-70 RECOMBINASE"/>
    <property type="match status" value="1"/>
</dbReference>
<dbReference type="PANTHER" id="PTHR14383:SF6">
    <property type="entry name" value="SWITCH-ASSOCIATED PROTEIN 70"/>
    <property type="match status" value="1"/>
</dbReference>
<dbReference type="Pfam" id="PF00169">
    <property type="entry name" value="PH"/>
    <property type="match status" value="1"/>
</dbReference>
<dbReference type="SMART" id="SM00233">
    <property type="entry name" value="PH"/>
    <property type="match status" value="1"/>
</dbReference>
<dbReference type="SUPFAM" id="SSF47473">
    <property type="entry name" value="EF-hand"/>
    <property type="match status" value="1"/>
</dbReference>
<dbReference type="SUPFAM" id="SSF50729">
    <property type="entry name" value="PH domain-like"/>
    <property type="match status" value="1"/>
</dbReference>
<dbReference type="PROSITE" id="PS50003">
    <property type="entry name" value="PH_DOMAIN"/>
    <property type="match status" value="1"/>
</dbReference>
<sequence>MGSLKDELLKGIWHAFTALDLDHSGKVSKSQLKVLSHNLCTVLKVPHDPVALEEHFRDDDEGPVSNQGYMPYLNKFILEKVQDNFDKIEFNRMCWTLCVKKNLTKNPLFITEEDAFKIWVIFNFLSEDKYPLIIVPEEIEYLLKKLTEAMGVSWQQEQFENYKINFDDSKDGLSAWELIELVGNGQFSKGMDRQTVSMAINEVFNELILDVLKQGYMIKKGHRRKNWTERWFVLKPHIISYYVSEDLKDKKGDILLDENCCVESLPDKDGKKCLFLIKCFDKTFEISASDKKKKQEWIQAIHSTIHLLKLGSPPPHKEARQRRKELRKKLLAEQEELERQMKELQIANENKQQELEAVRKKLEEAASRAAEEEKKRLQTQVELQARFSTELEREKLIRQQMEEQVAQKSSELEQYLQRVRELEDMYLKLQEALEDERQARQDEETVRKLQARLLEEESSKRAELEKWHLEQQQAIQTTEAEKQELENQRVIKEQALQEALEQLQQLELERKQALEQYEGVKKKLEMAAKMTKSWKDKVAHHEGLIRLIEPGSKNAHLITNWGPAAFTQAELEERQKSWKEKKTTE</sequence>
<proteinExistence type="evidence at protein level"/>
<keyword id="KW-1003">Cell membrane</keyword>
<keyword id="KW-0966">Cell projection</keyword>
<keyword id="KW-0175">Coiled coil</keyword>
<keyword id="KW-0963">Cytoplasm</keyword>
<keyword id="KW-0903">Direct protein sequencing</keyword>
<keyword id="KW-0238">DNA-binding</keyword>
<keyword id="KW-0472">Membrane</keyword>
<keyword id="KW-0539">Nucleus</keyword>
<keyword id="KW-0597">Phosphoprotein</keyword>
<keyword id="KW-1185">Reference proteome</keyword>
<name>SWP70_BOVIN</name>
<evidence type="ECO:0000250" key="1"/>
<evidence type="ECO:0000255" key="2"/>
<evidence type="ECO:0000255" key="3">
    <source>
        <dbReference type="PROSITE-ProRule" id="PRU00145"/>
    </source>
</evidence>
<evidence type="ECO:0000269" key="4">
    <source>
    </source>
</evidence>
<evidence type="ECO:0000305" key="5"/>
<protein>
    <recommendedName>
        <fullName>Switch-associated protein 70</fullName>
        <shortName>SWAP-70</shortName>
    </recommendedName>
</protein>